<name>THIG_ACIAD</name>
<feature type="chain" id="PRO_0000162774" description="Thiazole synthase">
    <location>
        <begin position="1"/>
        <end position="261"/>
    </location>
</feature>
<feature type="active site" description="Schiff-base intermediate with DXP" evidence="1">
    <location>
        <position position="102"/>
    </location>
</feature>
<feature type="binding site" evidence="1">
    <location>
        <position position="163"/>
    </location>
    <ligand>
        <name>1-deoxy-D-xylulose 5-phosphate</name>
        <dbReference type="ChEBI" id="CHEBI:57792"/>
    </ligand>
</feature>
<feature type="binding site" evidence="1">
    <location>
        <begin position="189"/>
        <end position="190"/>
    </location>
    <ligand>
        <name>1-deoxy-D-xylulose 5-phosphate</name>
        <dbReference type="ChEBI" id="CHEBI:57792"/>
    </ligand>
</feature>
<feature type="binding site" evidence="1">
    <location>
        <begin position="211"/>
        <end position="212"/>
    </location>
    <ligand>
        <name>1-deoxy-D-xylulose 5-phosphate</name>
        <dbReference type="ChEBI" id="CHEBI:57792"/>
    </ligand>
</feature>
<organism>
    <name type="scientific">Acinetobacter baylyi (strain ATCC 33305 / BD413 / ADP1)</name>
    <dbReference type="NCBI Taxonomy" id="62977"/>
    <lineage>
        <taxon>Bacteria</taxon>
        <taxon>Pseudomonadati</taxon>
        <taxon>Pseudomonadota</taxon>
        <taxon>Gammaproteobacteria</taxon>
        <taxon>Moraxellales</taxon>
        <taxon>Moraxellaceae</taxon>
        <taxon>Acinetobacter</taxon>
    </lineage>
</organism>
<evidence type="ECO:0000255" key="1">
    <source>
        <dbReference type="HAMAP-Rule" id="MF_00443"/>
    </source>
</evidence>
<proteinExistence type="inferred from homology"/>
<accession>Q6FCN1</accession>
<dbReference type="EC" id="2.8.1.10" evidence="1"/>
<dbReference type="EMBL" id="CR543861">
    <property type="protein sequence ID" value="CAG68178.1"/>
    <property type="molecule type" value="Genomic_DNA"/>
</dbReference>
<dbReference type="RefSeq" id="WP_004925831.1">
    <property type="nucleotide sequence ID" value="NC_005966.1"/>
</dbReference>
<dbReference type="SMR" id="Q6FCN1"/>
<dbReference type="STRING" id="202950.GCA_001485005_01065"/>
<dbReference type="GeneID" id="45233723"/>
<dbReference type="KEGG" id="aci:ACIAD1308"/>
<dbReference type="eggNOG" id="COG2022">
    <property type="taxonomic scope" value="Bacteria"/>
</dbReference>
<dbReference type="HOGENOM" id="CLU_062233_1_1_6"/>
<dbReference type="OrthoDB" id="9805935at2"/>
<dbReference type="BioCyc" id="ASP62977:ACIAD_RS06005-MONOMER"/>
<dbReference type="UniPathway" id="UPA00060"/>
<dbReference type="Proteomes" id="UP000000430">
    <property type="component" value="Chromosome"/>
</dbReference>
<dbReference type="GO" id="GO:0005737">
    <property type="term" value="C:cytoplasm"/>
    <property type="evidence" value="ECO:0007669"/>
    <property type="project" value="UniProtKB-SubCell"/>
</dbReference>
<dbReference type="GO" id="GO:1990107">
    <property type="term" value="F:thiazole synthase activity"/>
    <property type="evidence" value="ECO:0007669"/>
    <property type="project" value="UniProtKB-EC"/>
</dbReference>
<dbReference type="GO" id="GO:0009229">
    <property type="term" value="P:thiamine diphosphate biosynthetic process"/>
    <property type="evidence" value="ECO:0007669"/>
    <property type="project" value="UniProtKB-UniRule"/>
</dbReference>
<dbReference type="CDD" id="cd04728">
    <property type="entry name" value="ThiG"/>
    <property type="match status" value="1"/>
</dbReference>
<dbReference type="Gene3D" id="3.20.20.70">
    <property type="entry name" value="Aldolase class I"/>
    <property type="match status" value="1"/>
</dbReference>
<dbReference type="HAMAP" id="MF_00443">
    <property type="entry name" value="ThiG"/>
    <property type="match status" value="1"/>
</dbReference>
<dbReference type="InterPro" id="IPR013785">
    <property type="entry name" value="Aldolase_TIM"/>
</dbReference>
<dbReference type="InterPro" id="IPR033983">
    <property type="entry name" value="Thiazole_synthase_ThiG"/>
</dbReference>
<dbReference type="InterPro" id="IPR008867">
    <property type="entry name" value="ThiG"/>
</dbReference>
<dbReference type="PANTHER" id="PTHR34266">
    <property type="entry name" value="THIAZOLE SYNTHASE"/>
    <property type="match status" value="1"/>
</dbReference>
<dbReference type="PANTHER" id="PTHR34266:SF2">
    <property type="entry name" value="THIAZOLE SYNTHASE"/>
    <property type="match status" value="1"/>
</dbReference>
<dbReference type="Pfam" id="PF05690">
    <property type="entry name" value="ThiG"/>
    <property type="match status" value="1"/>
</dbReference>
<dbReference type="SUPFAM" id="SSF110399">
    <property type="entry name" value="ThiG-like"/>
    <property type="match status" value="1"/>
</dbReference>
<comment type="function">
    <text evidence="1">Catalyzes the rearrangement of 1-deoxy-D-xylulose 5-phosphate (DXP) to produce the thiazole phosphate moiety of thiamine. Sulfur is provided by the thiocarboxylate moiety of the carrier protein ThiS. In vitro, sulfur can be provided by H(2)S.</text>
</comment>
<comment type="catalytic activity">
    <reaction evidence="1">
        <text>[ThiS sulfur-carrier protein]-C-terminal-Gly-aminoethanethioate + 2-iminoacetate + 1-deoxy-D-xylulose 5-phosphate = [ThiS sulfur-carrier protein]-C-terminal Gly-Gly + 2-[(2R,5Z)-2-carboxy-4-methylthiazol-5(2H)-ylidene]ethyl phosphate + 2 H2O + H(+)</text>
        <dbReference type="Rhea" id="RHEA:26297"/>
        <dbReference type="Rhea" id="RHEA-COMP:12909"/>
        <dbReference type="Rhea" id="RHEA-COMP:19908"/>
        <dbReference type="ChEBI" id="CHEBI:15377"/>
        <dbReference type="ChEBI" id="CHEBI:15378"/>
        <dbReference type="ChEBI" id="CHEBI:57792"/>
        <dbReference type="ChEBI" id="CHEBI:62899"/>
        <dbReference type="ChEBI" id="CHEBI:77846"/>
        <dbReference type="ChEBI" id="CHEBI:90778"/>
        <dbReference type="ChEBI" id="CHEBI:232372"/>
        <dbReference type="EC" id="2.8.1.10"/>
    </reaction>
</comment>
<comment type="pathway">
    <text evidence="1">Cofactor biosynthesis; thiamine diphosphate biosynthesis.</text>
</comment>
<comment type="subunit">
    <text evidence="1">Homotetramer. Forms heterodimers with either ThiH or ThiS.</text>
</comment>
<comment type="subcellular location">
    <subcellularLocation>
        <location evidence="1">Cytoplasm</location>
    </subcellularLocation>
</comment>
<comment type="similarity">
    <text evidence="1">Belongs to the ThiG family.</text>
</comment>
<reference key="1">
    <citation type="journal article" date="2004" name="Nucleic Acids Res.">
        <title>Unique features revealed by the genome sequence of Acinetobacter sp. ADP1, a versatile and naturally transformation competent bacterium.</title>
        <authorList>
            <person name="Barbe V."/>
            <person name="Vallenet D."/>
            <person name="Fonknechten N."/>
            <person name="Kreimeyer A."/>
            <person name="Oztas S."/>
            <person name="Labarre L."/>
            <person name="Cruveiller S."/>
            <person name="Robert C."/>
            <person name="Duprat S."/>
            <person name="Wincker P."/>
            <person name="Ornston L.N."/>
            <person name="Weissenbach J."/>
            <person name="Marliere P."/>
            <person name="Cohen G.N."/>
            <person name="Medigue C."/>
        </authorList>
    </citation>
    <scope>NUCLEOTIDE SEQUENCE [LARGE SCALE GENOMIC DNA]</scope>
    <source>
        <strain>ATCC 33305 / BD413 / ADP1</strain>
    </source>
</reference>
<keyword id="KW-0963">Cytoplasm</keyword>
<keyword id="KW-0704">Schiff base</keyword>
<keyword id="KW-0784">Thiamine biosynthesis</keyword>
<keyword id="KW-0808">Transferase</keyword>
<gene>
    <name evidence="1" type="primary">thiG</name>
    <name type="ordered locus">ACIAD1308</name>
</gene>
<sequence length="261" mass="27810">MQDSPLIIGSRQFQSRLLVGTGKYKDLNETDLAIQASGAEIVTVAIRRVNIGQHADQPNLLSVIPPEKYTILPNTAGCFDADSAIRTCMLARELLDGHNLVKLEVLGDQDTLYPNITETLKAARTLIDDGFEIMVYTSDDPIVAKELESMGCVAIMPLGSLIGSGLGILNPHTISIIKENAKVPVLVDAGVGTASDAAIAMELGCDGVLMNTAIAAAQHPVLMASAMKKAIEAGREAFLAGRMPRKRMANASSPETGYFFK</sequence>
<protein>
    <recommendedName>
        <fullName evidence="1">Thiazole synthase</fullName>
        <ecNumber evidence="1">2.8.1.10</ecNumber>
    </recommendedName>
</protein>